<organism>
    <name type="scientific">Dictyostelium discoideum</name>
    <name type="common">Social amoeba</name>
    <dbReference type="NCBI Taxonomy" id="44689"/>
    <lineage>
        <taxon>Eukaryota</taxon>
        <taxon>Amoebozoa</taxon>
        <taxon>Evosea</taxon>
        <taxon>Eumycetozoa</taxon>
        <taxon>Dictyostelia</taxon>
        <taxon>Dictyosteliales</taxon>
        <taxon>Dictyosteliaceae</taxon>
        <taxon>Dictyostelium</taxon>
    </lineage>
</organism>
<gene>
    <name type="ORF">DDB_G0292106</name>
</gene>
<feature type="chain" id="PRO_0000344406" description="Uncharacterized protein DDB_G0292106">
    <location>
        <begin position="1"/>
        <end position="310"/>
    </location>
</feature>
<feature type="region of interest" description="Disordered" evidence="2">
    <location>
        <begin position="1"/>
        <end position="53"/>
    </location>
</feature>
<feature type="region of interest" description="Disordered" evidence="2">
    <location>
        <begin position="78"/>
        <end position="127"/>
    </location>
</feature>
<feature type="region of interest" description="Disordered" evidence="2">
    <location>
        <begin position="153"/>
        <end position="217"/>
    </location>
</feature>
<feature type="coiled-coil region" evidence="1">
    <location>
        <begin position="268"/>
        <end position="299"/>
    </location>
</feature>
<feature type="compositionally biased region" description="Acidic residues" evidence="2">
    <location>
        <begin position="11"/>
        <end position="25"/>
    </location>
</feature>
<feature type="compositionally biased region" description="Polar residues" evidence="2">
    <location>
        <begin position="37"/>
        <end position="49"/>
    </location>
</feature>
<feature type="compositionally biased region" description="Polar residues" evidence="2">
    <location>
        <begin position="78"/>
        <end position="88"/>
    </location>
</feature>
<feature type="compositionally biased region" description="Low complexity" evidence="2">
    <location>
        <begin position="94"/>
        <end position="126"/>
    </location>
</feature>
<feature type="compositionally biased region" description="Low complexity" evidence="2">
    <location>
        <begin position="164"/>
        <end position="184"/>
    </location>
</feature>
<feature type="compositionally biased region" description="Low complexity" evidence="2">
    <location>
        <begin position="192"/>
        <end position="208"/>
    </location>
</feature>
<protein>
    <recommendedName>
        <fullName>Uncharacterized protein DDB_G0292106</fullName>
    </recommendedName>
</protein>
<evidence type="ECO:0000255" key="1"/>
<evidence type="ECO:0000256" key="2">
    <source>
        <dbReference type="SAM" id="MobiDB-lite"/>
    </source>
</evidence>
<reference key="1">
    <citation type="journal article" date="2005" name="Nature">
        <title>The genome of the social amoeba Dictyostelium discoideum.</title>
        <authorList>
            <person name="Eichinger L."/>
            <person name="Pachebat J.A."/>
            <person name="Gloeckner G."/>
            <person name="Rajandream M.A."/>
            <person name="Sucgang R."/>
            <person name="Berriman M."/>
            <person name="Song J."/>
            <person name="Olsen R."/>
            <person name="Szafranski K."/>
            <person name="Xu Q."/>
            <person name="Tunggal B."/>
            <person name="Kummerfeld S."/>
            <person name="Madera M."/>
            <person name="Konfortov B.A."/>
            <person name="Rivero F."/>
            <person name="Bankier A.T."/>
            <person name="Lehmann R."/>
            <person name="Hamlin N."/>
            <person name="Davies R."/>
            <person name="Gaudet P."/>
            <person name="Fey P."/>
            <person name="Pilcher K."/>
            <person name="Chen G."/>
            <person name="Saunders D."/>
            <person name="Sodergren E.J."/>
            <person name="Davis P."/>
            <person name="Kerhornou A."/>
            <person name="Nie X."/>
            <person name="Hall N."/>
            <person name="Anjard C."/>
            <person name="Hemphill L."/>
            <person name="Bason N."/>
            <person name="Farbrother P."/>
            <person name="Desany B."/>
            <person name="Just E."/>
            <person name="Morio T."/>
            <person name="Rost R."/>
            <person name="Churcher C.M."/>
            <person name="Cooper J."/>
            <person name="Haydock S."/>
            <person name="van Driessche N."/>
            <person name="Cronin A."/>
            <person name="Goodhead I."/>
            <person name="Muzny D.M."/>
            <person name="Mourier T."/>
            <person name="Pain A."/>
            <person name="Lu M."/>
            <person name="Harper D."/>
            <person name="Lindsay R."/>
            <person name="Hauser H."/>
            <person name="James K.D."/>
            <person name="Quiles M."/>
            <person name="Madan Babu M."/>
            <person name="Saito T."/>
            <person name="Buchrieser C."/>
            <person name="Wardroper A."/>
            <person name="Felder M."/>
            <person name="Thangavelu M."/>
            <person name="Johnson D."/>
            <person name="Knights A."/>
            <person name="Loulseged H."/>
            <person name="Mungall K.L."/>
            <person name="Oliver K."/>
            <person name="Price C."/>
            <person name="Quail M.A."/>
            <person name="Urushihara H."/>
            <person name="Hernandez J."/>
            <person name="Rabbinowitsch E."/>
            <person name="Steffen D."/>
            <person name="Sanders M."/>
            <person name="Ma J."/>
            <person name="Kohara Y."/>
            <person name="Sharp S."/>
            <person name="Simmonds M.N."/>
            <person name="Spiegler S."/>
            <person name="Tivey A."/>
            <person name="Sugano S."/>
            <person name="White B."/>
            <person name="Walker D."/>
            <person name="Woodward J.R."/>
            <person name="Winckler T."/>
            <person name="Tanaka Y."/>
            <person name="Shaulsky G."/>
            <person name="Schleicher M."/>
            <person name="Weinstock G.M."/>
            <person name="Rosenthal A."/>
            <person name="Cox E.C."/>
            <person name="Chisholm R.L."/>
            <person name="Gibbs R.A."/>
            <person name="Loomis W.F."/>
            <person name="Platzer M."/>
            <person name="Kay R.R."/>
            <person name="Williams J.G."/>
            <person name="Dear P.H."/>
            <person name="Noegel A.A."/>
            <person name="Barrell B.G."/>
            <person name="Kuspa A."/>
        </authorList>
    </citation>
    <scope>NUCLEOTIDE SEQUENCE [LARGE SCALE GENOMIC DNA]</scope>
    <source>
        <strain>AX4</strain>
    </source>
</reference>
<accession>Q54DP0</accession>
<name>Y4227_DICDI</name>
<proteinExistence type="predicted"/>
<keyword id="KW-0175">Coiled coil</keyword>
<keyword id="KW-1185">Reference proteome</keyword>
<dbReference type="EMBL" id="AAFI02000187">
    <property type="protein sequence ID" value="EAL61409.1"/>
    <property type="molecule type" value="Genomic_DNA"/>
</dbReference>
<dbReference type="RefSeq" id="XP_629832.1">
    <property type="nucleotide sequence ID" value="XM_629830.1"/>
</dbReference>
<dbReference type="SMR" id="Q54DP0"/>
<dbReference type="FunCoup" id="Q54DP0">
    <property type="interactions" value="642"/>
</dbReference>
<dbReference type="STRING" id="44689.Q54DP0"/>
<dbReference type="GlyGen" id="Q54DP0">
    <property type="glycosylation" value="1 site"/>
</dbReference>
<dbReference type="PaxDb" id="44689-DDB0184227"/>
<dbReference type="EnsemblProtists" id="EAL61409">
    <property type="protein sequence ID" value="EAL61409"/>
    <property type="gene ID" value="DDB_G0292106"/>
</dbReference>
<dbReference type="GeneID" id="8628513"/>
<dbReference type="KEGG" id="ddi:DDB_G0292106"/>
<dbReference type="dictyBase" id="DDB_G0292106"/>
<dbReference type="VEuPathDB" id="AmoebaDB:DDB_G0292106"/>
<dbReference type="eggNOG" id="ENOG502RHTI">
    <property type="taxonomic scope" value="Eukaryota"/>
</dbReference>
<dbReference type="HOGENOM" id="CLU_898419_0_0_1"/>
<dbReference type="InParanoid" id="Q54DP0"/>
<dbReference type="OMA" id="RTHATYY"/>
<dbReference type="PRO" id="PR:Q54DP0"/>
<dbReference type="Proteomes" id="UP000002195">
    <property type="component" value="Chromosome 6"/>
</dbReference>
<dbReference type="GO" id="GO:0031083">
    <property type="term" value="C:BLOC-1 complex"/>
    <property type="evidence" value="ECO:0000318"/>
    <property type="project" value="GO_Central"/>
</dbReference>
<dbReference type="InterPro" id="IPR017245">
    <property type="entry name" value="BLOC-1_complex_su-3"/>
</dbReference>
<dbReference type="PANTHER" id="PTHR31974">
    <property type="entry name" value="BIOGENESIS OF LYSOSOME-RELATED ORGANELLES COMPLEX 1 SUBUNIT 3"/>
    <property type="match status" value="1"/>
</dbReference>
<dbReference type="PANTHER" id="PTHR31974:SF2">
    <property type="entry name" value="BIOGENESIS OF LYSOSOME-RELATED ORGANELLES COMPLEX 1 SUBUNIT 3"/>
    <property type="match status" value="1"/>
</dbReference>
<dbReference type="Pfam" id="PF15753">
    <property type="entry name" value="BLOC1S3"/>
    <property type="match status" value="1"/>
</dbReference>
<sequence length="310" mass="34777">MSNKNKKIVQGEEDEEEDDLYDDYDDKPKTTTTTTTSTSMNKSDSNISLNKEMLINDHPEDLIVGANSPLNVSVTTTPIENINENPSPVNLDEQTQQTQPQQNPISPITPLSSSSPSSSTTTTTITNSAVSPSNILITPTQSPIEIKPIIETQQPLPSPPQQGPSPIILQHQQQQQPLQSQYITPPIPQPQYQPIASQQSQQPQQIPTRKLSGSQMLPQRIPLSLGENKLKEFNENLRKSYCTKTHMLYYSINKEVSGANQHLTGVIDLIKSVQHNIRQYNDDILTLEEKLEQTEWSLQYYFNNNSNNNS</sequence>